<reference key="1">
    <citation type="submission" date="2007-05" db="EMBL/GenBank/DDBJ databases">
        <title>Complete sequence of chromosome of Psychrobacter sp. PRwf-1.</title>
        <authorList>
            <consortium name="US DOE Joint Genome Institute"/>
            <person name="Copeland A."/>
            <person name="Lucas S."/>
            <person name="Lapidus A."/>
            <person name="Barry K."/>
            <person name="Detter J.C."/>
            <person name="Glavina del Rio T."/>
            <person name="Hammon N."/>
            <person name="Israni S."/>
            <person name="Dalin E."/>
            <person name="Tice H."/>
            <person name="Pitluck S."/>
            <person name="Chain P."/>
            <person name="Malfatti S."/>
            <person name="Shin M."/>
            <person name="Vergez L."/>
            <person name="Schmutz J."/>
            <person name="Larimer F."/>
            <person name="Land M."/>
            <person name="Hauser L."/>
            <person name="Kyrpides N."/>
            <person name="Kim E."/>
            <person name="Tiedje J."/>
            <person name="Richardson P."/>
        </authorList>
    </citation>
    <scope>NUCLEOTIDE SEQUENCE [LARGE SCALE GENOMIC DNA]</scope>
    <source>
        <strain>PRwf-1</strain>
    </source>
</reference>
<sequence length="130" mass="13707">MAKDTRGRKKTARRSVSEGVAHIHASFNNTIVTITDRQGNALAWATSGGQGFRGSRKSTPFAAQVAAEVAGKAAQETYGVKNVDVLVKGPGPGRESAVRALGALGYKINSISDVTPIPHNGCRPPKKRRV</sequence>
<organism>
    <name type="scientific">Psychrobacter sp. (strain PRwf-1)</name>
    <dbReference type="NCBI Taxonomy" id="349106"/>
    <lineage>
        <taxon>Bacteria</taxon>
        <taxon>Pseudomonadati</taxon>
        <taxon>Pseudomonadota</taxon>
        <taxon>Gammaproteobacteria</taxon>
        <taxon>Moraxellales</taxon>
        <taxon>Moraxellaceae</taxon>
        <taxon>Psychrobacter</taxon>
    </lineage>
</organism>
<evidence type="ECO:0000255" key="1">
    <source>
        <dbReference type="HAMAP-Rule" id="MF_01310"/>
    </source>
</evidence>
<evidence type="ECO:0000305" key="2"/>
<dbReference type="EMBL" id="CP000713">
    <property type="protein sequence ID" value="ABQ93403.1"/>
    <property type="molecule type" value="Genomic_DNA"/>
</dbReference>
<dbReference type="SMR" id="A5WCL2"/>
<dbReference type="STRING" id="349106.PsycPRwf_0448"/>
<dbReference type="KEGG" id="prw:PsycPRwf_0448"/>
<dbReference type="eggNOG" id="COG0100">
    <property type="taxonomic scope" value="Bacteria"/>
</dbReference>
<dbReference type="HOGENOM" id="CLU_072439_5_0_6"/>
<dbReference type="GO" id="GO:1990904">
    <property type="term" value="C:ribonucleoprotein complex"/>
    <property type="evidence" value="ECO:0007669"/>
    <property type="project" value="UniProtKB-KW"/>
</dbReference>
<dbReference type="GO" id="GO:0005840">
    <property type="term" value="C:ribosome"/>
    <property type="evidence" value="ECO:0007669"/>
    <property type="project" value="UniProtKB-KW"/>
</dbReference>
<dbReference type="GO" id="GO:0019843">
    <property type="term" value="F:rRNA binding"/>
    <property type="evidence" value="ECO:0007669"/>
    <property type="project" value="UniProtKB-UniRule"/>
</dbReference>
<dbReference type="GO" id="GO:0003735">
    <property type="term" value="F:structural constituent of ribosome"/>
    <property type="evidence" value="ECO:0007669"/>
    <property type="project" value="InterPro"/>
</dbReference>
<dbReference type="GO" id="GO:0006412">
    <property type="term" value="P:translation"/>
    <property type="evidence" value="ECO:0007669"/>
    <property type="project" value="UniProtKB-UniRule"/>
</dbReference>
<dbReference type="FunFam" id="3.30.420.80:FF:000001">
    <property type="entry name" value="30S ribosomal protein S11"/>
    <property type="match status" value="1"/>
</dbReference>
<dbReference type="Gene3D" id="3.30.420.80">
    <property type="entry name" value="Ribosomal protein S11"/>
    <property type="match status" value="1"/>
</dbReference>
<dbReference type="HAMAP" id="MF_01310">
    <property type="entry name" value="Ribosomal_uS11"/>
    <property type="match status" value="1"/>
</dbReference>
<dbReference type="InterPro" id="IPR001971">
    <property type="entry name" value="Ribosomal_uS11"/>
</dbReference>
<dbReference type="InterPro" id="IPR019981">
    <property type="entry name" value="Ribosomal_uS11_bac-type"/>
</dbReference>
<dbReference type="InterPro" id="IPR018102">
    <property type="entry name" value="Ribosomal_uS11_CS"/>
</dbReference>
<dbReference type="InterPro" id="IPR036967">
    <property type="entry name" value="Ribosomal_uS11_sf"/>
</dbReference>
<dbReference type="NCBIfam" id="NF003698">
    <property type="entry name" value="PRK05309.1"/>
    <property type="match status" value="1"/>
</dbReference>
<dbReference type="NCBIfam" id="TIGR03632">
    <property type="entry name" value="uS11_bact"/>
    <property type="match status" value="1"/>
</dbReference>
<dbReference type="PANTHER" id="PTHR11759">
    <property type="entry name" value="40S RIBOSOMAL PROTEIN S14/30S RIBOSOMAL PROTEIN S11"/>
    <property type="match status" value="1"/>
</dbReference>
<dbReference type="Pfam" id="PF00411">
    <property type="entry name" value="Ribosomal_S11"/>
    <property type="match status" value="1"/>
</dbReference>
<dbReference type="PIRSF" id="PIRSF002131">
    <property type="entry name" value="Ribosomal_S11"/>
    <property type="match status" value="1"/>
</dbReference>
<dbReference type="SUPFAM" id="SSF53137">
    <property type="entry name" value="Translational machinery components"/>
    <property type="match status" value="1"/>
</dbReference>
<dbReference type="PROSITE" id="PS00054">
    <property type="entry name" value="RIBOSOMAL_S11"/>
    <property type="match status" value="1"/>
</dbReference>
<protein>
    <recommendedName>
        <fullName evidence="1">Small ribosomal subunit protein uS11</fullName>
    </recommendedName>
    <alternativeName>
        <fullName evidence="2">30S ribosomal protein S11</fullName>
    </alternativeName>
</protein>
<proteinExistence type="inferred from homology"/>
<feature type="chain" id="PRO_1000073205" description="Small ribosomal subunit protein uS11">
    <location>
        <begin position="1"/>
        <end position="130"/>
    </location>
</feature>
<gene>
    <name evidence="1" type="primary">rpsK</name>
    <name type="ordered locus">PsycPRwf_0448</name>
</gene>
<keyword id="KW-0687">Ribonucleoprotein</keyword>
<keyword id="KW-0689">Ribosomal protein</keyword>
<keyword id="KW-0694">RNA-binding</keyword>
<keyword id="KW-0699">rRNA-binding</keyword>
<comment type="function">
    <text evidence="1">Located on the platform of the 30S subunit, it bridges several disparate RNA helices of the 16S rRNA. Forms part of the Shine-Dalgarno cleft in the 70S ribosome.</text>
</comment>
<comment type="subunit">
    <text evidence="1">Part of the 30S ribosomal subunit. Interacts with proteins S7 and S18. Binds to IF-3.</text>
</comment>
<comment type="similarity">
    <text evidence="1">Belongs to the universal ribosomal protein uS11 family.</text>
</comment>
<accession>A5WCL2</accession>
<name>RS11_PSYWF</name>